<evidence type="ECO:0000255" key="1">
    <source>
        <dbReference type="HAMAP-Rule" id="MF_01658"/>
    </source>
</evidence>
<sequence>MVLDELISEFDRGLRSLTGISRMSRPVPAPADAPDAELTPAERTHAAGLMRVNHVGEVCAQALYQAQKLTARTASAKAMFEEAAREEEDHLAWTAHRLKELDSRPSLLNPLWYAGALAIGVAAGALGDKVSLGFMAETERQVESHLEGHMSELPATDTASRAIVDQMRIDEVKHGKAATDAGGIELPLPARMLMRAASKVMTSTAYYL</sequence>
<organism>
    <name type="scientific">Burkholderia cenocepacia (strain ATCC BAA-245 / DSM 16553 / LMG 16656 / NCTC 13227 / J2315 / CF5610)</name>
    <name type="common">Burkholderia cepacia (strain J2315)</name>
    <dbReference type="NCBI Taxonomy" id="216591"/>
    <lineage>
        <taxon>Bacteria</taxon>
        <taxon>Pseudomonadati</taxon>
        <taxon>Pseudomonadota</taxon>
        <taxon>Betaproteobacteria</taxon>
        <taxon>Burkholderiales</taxon>
        <taxon>Burkholderiaceae</taxon>
        <taxon>Burkholderia</taxon>
        <taxon>Burkholderia cepacia complex</taxon>
    </lineage>
</organism>
<accession>B4E6K2</accession>
<name>COQ7_BURCJ</name>
<proteinExistence type="inferred from homology"/>
<comment type="function">
    <text evidence="1">Catalyzes the hydroxylation of 2-nonaprenyl-3-methyl-6-methoxy-1,4-benzoquinol during ubiquinone biosynthesis.</text>
</comment>
<comment type="catalytic activity">
    <reaction evidence="1">
        <text>a 5-methoxy-2-methyl-3-(all-trans-polyprenyl)benzene-1,4-diol + AH2 + O2 = a 3-demethylubiquinol + A + H2O</text>
        <dbReference type="Rhea" id="RHEA:50908"/>
        <dbReference type="Rhea" id="RHEA-COMP:10859"/>
        <dbReference type="Rhea" id="RHEA-COMP:10914"/>
        <dbReference type="ChEBI" id="CHEBI:13193"/>
        <dbReference type="ChEBI" id="CHEBI:15377"/>
        <dbReference type="ChEBI" id="CHEBI:15379"/>
        <dbReference type="ChEBI" id="CHEBI:17499"/>
        <dbReference type="ChEBI" id="CHEBI:84167"/>
        <dbReference type="ChEBI" id="CHEBI:84422"/>
        <dbReference type="EC" id="1.14.99.60"/>
    </reaction>
</comment>
<comment type="cofactor">
    <cofactor evidence="1">
        <name>Fe cation</name>
        <dbReference type="ChEBI" id="CHEBI:24875"/>
    </cofactor>
    <text evidence="1">Binds 2 iron ions per subunit.</text>
</comment>
<comment type="pathway">
    <text evidence="1">Cofactor biosynthesis; ubiquinone biosynthesis.</text>
</comment>
<comment type="subcellular location">
    <subcellularLocation>
        <location evidence="1">Cell membrane</location>
        <topology evidence="1">Peripheral membrane protein</topology>
    </subcellularLocation>
</comment>
<comment type="similarity">
    <text evidence="1">Belongs to the COQ7 family.</text>
</comment>
<keyword id="KW-1003">Cell membrane</keyword>
<keyword id="KW-0408">Iron</keyword>
<keyword id="KW-0472">Membrane</keyword>
<keyword id="KW-0479">Metal-binding</keyword>
<keyword id="KW-0503">Monooxygenase</keyword>
<keyword id="KW-0560">Oxidoreductase</keyword>
<keyword id="KW-0831">Ubiquinone biosynthesis</keyword>
<dbReference type="EC" id="1.14.99.60" evidence="1"/>
<dbReference type="EMBL" id="AM747720">
    <property type="protein sequence ID" value="CAR53795.1"/>
    <property type="molecule type" value="Genomic_DNA"/>
</dbReference>
<dbReference type="RefSeq" id="WP_006487096.1">
    <property type="nucleotide sequence ID" value="NC_011000.1"/>
</dbReference>
<dbReference type="SMR" id="B4E6K2"/>
<dbReference type="KEGG" id="bcj:BCAL3472"/>
<dbReference type="eggNOG" id="COG2941">
    <property type="taxonomic scope" value="Bacteria"/>
</dbReference>
<dbReference type="HOGENOM" id="CLU_088601_0_0_4"/>
<dbReference type="BioCyc" id="BCEN216591:G1G1V-3860-MONOMER"/>
<dbReference type="UniPathway" id="UPA00232"/>
<dbReference type="Proteomes" id="UP000001035">
    <property type="component" value="Chromosome 1"/>
</dbReference>
<dbReference type="GO" id="GO:0005886">
    <property type="term" value="C:plasma membrane"/>
    <property type="evidence" value="ECO:0007669"/>
    <property type="project" value="UniProtKB-SubCell"/>
</dbReference>
<dbReference type="GO" id="GO:0008682">
    <property type="term" value="F:3-demethoxyubiquinol 3-hydroxylase activity"/>
    <property type="evidence" value="ECO:0007669"/>
    <property type="project" value="UniProtKB-EC"/>
</dbReference>
<dbReference type="GO" id="GO:0046872">
    <property type="term" value="F:metal ion binding"/>
    <property type="evidence" value="ECO:0007669"/>
    <property type="project" value="UniProtKB-KW"/>
</dbReference>
<dbReference type="GO" id="GO:0006744">
    <property type="term" value="P:ubiquinone biosynthetic process"/>
    <property type="evidence" value="ECO:0007669"/>
    <property type="project" value="UniProtKB-UniRule"/>
</dbReference>
<dbReference type="CDD" id="cd01042">
    <property type="entry name" value="DMQH"/>
    <property type="match status" value="1"/>
</dbReference>
<dbReference type="Gene3D" id="1.20.1260.10">
    <property type="match status" value="1"/>
</dbReference>
<dbReference type="HAMAP" id="MF_01658">
    <property type="entry name" value="COQ7"/>
    <property type="match status" value="1"/>
</dbReference>
<dbReference type="InterPro" id="IPR047809">
    <property type="entry name" value="COQ7_proteobact"/>
</dbReference>
<dbReference type="InterPro" id="IPR012347">
    <property type="entry name" value="Ferritin-like"/>
</dbReference>
<dbReference type="InterPro" id="IPR009078">
    <property type="entry name" value="Ferritin-like_SF"/>
</dbReference>
<dbReference type="InterPro" id="IPR011566">
    <property type="entry name" value="Ubq_synth_Coq7"/>
</dbReference>
<dbReference type="NCBIfam" id="NF033656">
    <property type="entry name" value="DMQ_monoox_COQ7"/>
    <property type="match status" value="1"/>
</dbReference>
<dbReference type="PANTHER" id="PTHR11237:SF4">
    <property type="entry name" value="5-DEMETHOXYUBIQUINONE HYDROXYLASE, MITOCHONDRIAL"/>
    <property type="match status" value="1"/>
</dbReference>
<dbReference type="PANTHER" id="PTHR11237">
    <property type="entry name" value="COENZYME Q10 BIOSYNTHESIS PROTEIN 7"/>
    <property type="match status" value="1"/>
</dbReference>
<dbReference type="Pfam" id="PF03232">
    <property type="entry name" value="COQ7"/>
    <property type="match status" value="1"/>
</dbReference>
<dbReference type="SUPFAM" id="SSF47240">
    <property type="entry name" value="Ferritin-like"/>
    <property type="match status" value="1"/>
</dbReference>
<gene>
    <name evidence="1" type="primary">coq7</name>
    <name type="ordered locus">BceJ2315_34100</name>
    <name type="ORF">BCAL3472</name>
</gene>
<feature type="chain" id="PRO_1000187044" description="3-demethoxyubiquinol 3-hydroxylase">
    <location>
        <begin position="1"/>
        <end position="208"/>
    </location>
</feature>
<feature type="binding site" evidence="1">
    <location>
        <position position="57"/>
    </location>
    <ligand>
        <name>Fe cation</name>
        <dbReference type="ChEBI" id="CHEBI:24875"/>
        <label>1</label>
    </ligand>
</feature>
<feature type="binding site" evidence="1">
    <location>
        <position position="87"/>
    </location>
    <ligand>
        <name>Fe cation</name>
        <dbReference type="ChEBI" id="CHEBI:24875"/>
        <label>1</label>
    </ligand>
</feature>
<feature type="binding site" evidence="1">
    <location>
        <position position="87"/>
    </location>
    <ligand>
        <name>Fe cation</name>
        <dbReference type="ChEBI" id="CHEBI:24875"/>
        <label>2</label>
    </ligand>
</feature>
<feature type="binding site" evidence="1">
    <location>
        <position position="90"/>
    </location>
    <ligand>
        <name>Fe cation</name>
        <dbReference type="ChEBI" id="CHEBI:24875"/>
        <label>1</label>
    </ligand>
</feature>
<feature type="binding site" evidence="1">
    <location>
        <position position="139"/>
    </location>
    <ligand>
        <name>Fe cation</name>
        <dbReference type="ChEBI" id="CHEBI:24875"/>
        <label>2</label>
    </ligand>
</feature>
<feature type="binding site" evidence="1">
    <location>
        <position position="171"/>
    </location>
    <ligand>
        <name>Fe cation</name>
        <dbReference type="ChEBI" id="CHEBI:24875"/>
        <label>1</label>
    </ligand>
</feature>
<feature type="binding site" evidence="1">
    <location>
        <position position="171"/>
    </location>
    <ligand>
        <name>Fe cation</name>
        <dbReference type="ChEBI" id="CHEBI:24875"/>
        <label>2</label>
    </ligand>
</feature>
<feature type="binding site" evidence="1">
    <location>
        <position position="174"/>
    </location>
    <ligand>
        <name>Fe cation</name>
        <dbReference type="ChEBI" id="CHEBI:24875"/>
        <label>2</label>
    </ligand>
</feature>
<reference key="1">
    <citation type="journal article" date="2009" name="J. Bacteriol.">
        <title>The genome of Burkholderia cenocepacia J2315, an epidemic pathogen of cystic fibrosis patients.</title>
        <authorList>
            <person name="Holden M.T."/>
            <person name="Seth-Smith H.M."/>
            <person name="Crossman L.C."/>
            <person name="Sebaihia M."/>
            <person name="Bentley S.D."/>
            <person name="Cerdeno-Tarraga A.M."/>
            <person name="Thomson N.R."/>
            <person name="Bason N."/>
            <person name="Quail M.A."/>
            <person name="Sharp S."/>
            <person name="Cherevach I."/>
            <person name="Churcher C."/>
            <person name="Goodhead I."/>
            <person name="Hauser H."/>
            <person name="Holroyd N."/>
            <person name="Mungall K."/>
            <person name="Scott P."/>
            <person name="Walker D."/>
            <person name="White B."/>
            <person name="Rose H."/>
            <person name="Iversen P."/>
            <person name="Mil-Homens D."/>
            <person name="Rocha E.P."/>
            <person name="Fialho A.M."/>
            <person name="Baldwin A."/>
            <person name="Dowson C."/>
            <person name="Barrell B.G."/>
            <person name="Govan J.R."/>
            <person name="Vandamme P."/>
            <person name="Hart C.A."/>
            <person name="Mahenthiralingam E."/>
            <person name="Parkhill J."/>
        </authorList>
    </citation>
    <scope>NUCLEOTIDE SEQUENCE [LARGE SCALE GENOMIC DNA]</scope>
    <source>
        <strain>ATCC BAA-245 / DSM 16553 / LMG 16656 / NCTC 13227 / J2315 / CF5610</strain>
    </source>
</reference>
<protein>
    <recommendedName>
        <fullName evidence="1">3-demethoxyubiquinol 3-hydroxylase</fullName>
        <shortName evidence="1">DMQ hydroxylase</shortName>
        <ecNumber evidence="1">1.14.99.60</ecNumber>
    </recommendedName>
    <alternativeName>
        <fullName evidence="1">2-nonaprenyl-3-methyl-6-methoxy-1,4-benzoquinol hydroxylase</fullName>
    </alternativeName>
</protein>